<evidence type="ECO:0000269" key="1">
    <source>
    </source>
</evidence>
<evidence type="ECO:0000303" key="2">
    <source>
    </source>
</evidence>
<evidence type="ECO:0000305" key="3"/>
<comment type="function">
    <text evidence="1">Involved in the biodegradation of 3-aminobenzoate (PubMed:29038259). Catalyzes the cleavage of the 5-aminosalicylate (5ASA) aromatic ring to form 4-amino-6-oxohepta-2,4-dienedioate (cis-ACOHDA) (PubMed:29038259). Can also convert gentisate, but the catalytic efficiency with 5ASA is 70-fold higher (PubMed:29038259).</text>
</comment>
<comment type="catalytic activity">
    <reaction evidence="1">
        <text>5-amino-2-hydroxybenzoate + O2 = (2Z,4E)-4-amino-6-oxohepta-2,4-dienedioate + H(+)</text>
        <dbReference type="Rhea" id="RHEA:56840"/>
        <dbReference type="ChEBI" id="CHEBI:15378"/>
        <dbReference type="ChEBI" id="CHEBI:15379"/>
        <dbReference type="ChEBI" id="CHEBI:20551"/>
        <dbReference type="ChEBI" id="CHEBI:141047"/>
        <dbReference type="EC" id="1.13.11.86"/>
    </reaction>
    <physiologicalReaction direction="left-to-right" evidence="1">
        <dbReference type="Rhea" id="RHEA:56841"/>
    </physiologicalReaction>
</comment>
<comment type="cofactor">
    <cofactor evidence="1">
        <name>Fe(2+)</name>
        <dbReference type="ChEBI" id="CHEBI:29033"/>
    </cofactor>
</comment>
<comment type="activity regulation">
    <text evidence="1">Inhibited by SDS and o-phenanthroline, a ferrous iron chelator (PubMed:29038259). Partially inhibited by EDTA (PubMed:29038259).</text>
</comment>
<comment type="biophysicochemical properties">
    <kinetics>
        <KM evidence="1">52 uM for 5-aminosalicylate</KM>
        <KM evidence="1">823 uM for gentisate</KM>
        <Vmax evidence="1">850.0 umol/min/mg enzyme with 5-aminosalicylate as substrate</Vmax>
        <Vmax evidence="1">185.0 umol/min/mg enzyme with gentisate as substrate</Vmax>
    </kinetics>
    <phDependence>
        <text evidence="1">Optimum pH is 8.0.</text>
    </phDependence>
    <temperatureDependence>
        <text evidence="1">Optimum temperature is 10 degrees Celsius.</text>
    </temperatureDependence>
</comment>
<comment type="induction">
    <text evidence="1">Induced by 3-aminobenzoate.</text>
</comment>
<comment type="disruption phenotype">
    <text evidence="1">Disruption mutant loses the ability to grow on 3-aminobenzoate or 5ASA.</text>
</comment>
<comment type="similarity">
    <text evidence="3">Belongs to the gentisate 1,2-dioxygenase family.</text>
</comment>
<dbReference type="EC" id="1.13.11.86" evidence="1"/>
<dbReference type="EMBL" id="KY399772">
    <property type="protein sequence ID" value="ARB18233.1"/>
    <property type="molecule type" value="Genomic_DNA"/>
</dbReference>
<dbReference type="SMR" id="A0A1V0ELS9"/>
<dbReference type="KEGG" id="ag:ARB18233"/>
<dbReference type="BioCyc" id="MetaCyc:MONOMER-20493"/>
<dbReference type="BRENDA" id="1.13.11.86">
    <property type="organism ID" value="15767"/>
</dbReference>
<dbReference type="GO" id="GO:0051213">
    <property type="term" value="F:dioxygenase activity"/>
    <property type="evidence" value="ECO:0007669"/>
    <property type="project" value="UniProtKB-KW"/>
</dbReference>
<dbReference type="GO" id="GO:0009056">
    <property type="term" value="P:catabolic process"/>
    <property type="evidence" value="ECO:0007669"/>
    <property type="project" value="UniProtKB-KW"/>
</dbReference>
<dbReference type="CDD" id="cd06992">
    <property type="entry name" value="cupin_GDO-like_C"/>
    <property type="match status" value="1"/>
</dbReference>
<dbReference type="Gene3D" id="2.60.120.10">
    <property type="entry name" value="Jelly Rolls"/>
    <property type="match status" value="1"/>
</dbReference>
<dbReference type="InterPro" id="IPR013096">
    <property type="entry name" value="Cupin_2"/>
</dbReference>
<dbReference type="InterPro" id="IPR047183">
    <property type="entry name" value="GDO-like"/>
</dbReference>
<dbReference type="InterPro" id="IPR014710">
    <property type="entry name" value="RmlC-like_jellyroll"/>
</dbReference>
<dbReference type="InterPro" id="IPR011051">
    <property type="entry name" value="RmlC_Cupin_sf"/>
</dbReference>
<dbReference type="PANTHER" id="PTHR41517">
    <property type="entry name" value="1,2-DIOXYGENASE PROTEIN-RELATED"/>
    <property type="match status" value="1"/>
</dbReference>
<dbReference type="PANTHER" id="PTHR41517:SF1">
    <property type="entry name" value="CUPIN"/>
    <property type="match status" value="1"/>
</dbReference>
<dbReference type="Pfam" id="PF07883">
    <property type="entry name" value="Cupin_2"/>
    <property type="match status" value="2"/>
</dbReference>
<dbReference type="SUPFAM" id="SSF51182">
    <property type="entry name" value="RmlC-like cupins"/>
    <property type="match status" value="1"/>
</dbReference>
<name>MABB_COMSP</name>
<sequence>MNAPDSFQTDLDALHEDMARANMAPTWKYVSDFVAKEPRVGFRPWLWRWNDVLPLLMRAGDLITPERGAERRSMEHVNPDLKSAYSTSHTIATAFQLVRAGETAPAHRHAAAAIRFAARSKGGSVYTRVQGERLMMEEFDLLLTPAGTWHEHANETANDIVWLDALDFPLVNLLKASVFEPGDSDTCEPKPDDFSRQHLGLYRPVGWSDYPEPHPVMRYPWVEMKAALDAAASSGATGSPFDGIVMAYTNPLNSGPTLPTLSCRAQLLRPKESTCAHRATSSTVYFVISGTGTTVVNGTAYRWGPGDVFVVPNWAWHEHLNGDSDAYLFSITDEPVMRTLGIYREQAYAAPGPHQLITGEFDSTQQCVRELSSL</sequence>
<gene>
    <name evidence="2" type="primary">mabB</name>
</gene>
<feature type="chain" id="PRO_0000457765" description="5-aminosalicylate 1,2-dioxygenase">
    <location>
        <begin position="1"/>
        <end position="374"/>
    </location>
</feature>
<feature type="mutagenesis site" description="Loss of activity." evidence="1">
    <original>H</original>
    <variation>A</variation>
    <location>
        <position position="107"/>
    </location>
</feature>
<feature type="mutagenesis site" description="Loss of activity." evidence="1">
    <original>H</original>
    <variation>A</variation>
    <location>
        <position position="109"/>
    </location>
</feature>
<feature type="mutagenesis site" description="Loss of activity." evidence="1">
    <original>H</original>
    <variation>A</variation>
    <location>
        <position position="150"/>
    </location>
</feature>
<proteinExistence type="evidence at protein level"/>
<keyword id="KW-0058">Aromatic hydrocarbons catabolism</keyword>
<keyword id="KW-0223">Dioxygenase</keyword>
<keyword id="KW-0408">Iron</keyword>
<keyword id="KW-0560">Oxidoreductase</keyword>
<accession>A0A1V0ELS9</accession>
<organism>
    <name type="scientific">Comamonas sp</name>
    <dbReference type="NCBI Taxonomy" id="34028"/>
    <lineage>
        <taxon>Bacteria</taxon>
        <taxon>Pseudomonadati</taxon>
        <taxon>Pseudomonadota</taxon>
        <taxon>Betaproteobacteria</taxon>
        <taxon>Burkholderiales</taxon>
        <taxon>Comamonadaceae</taxon>
        <taxon>Comamonas</taxon>
    </lineage>
</organism>
<reference key="1">
    <citation type="journal article" date="2018" name="J. Bacteriol.">
        <title>Novel gene encoding 5-aminosalicylate 1,2-dioxygenase from Comamonas sp. strain QT12 and catalytic properties of the purified enzyme.</title>
        <authorList>
            <person name="Yu H."/>
            <person name="Zhao S."/>
            <person name="Guo L."/>
        </authorList>
    </citation>
    <scope>NUCLEOTIDE SEQUENCE [GENOMIC DNA]</scope>
    <scope>FUNCTION</scope>
    <scope>CATALYTIC ACTIVITY</scope>
    <scope>COFACTOR</scope>
    <scope>ACTIVITY REGULATION</scope>
    <scope>BIOPHYSICOCHEMICAL PROPERTIES</scope>
    <scope>INDUCTION</scope>
    <scope>DISRUPTION PHENOTYPE</scope>
    <scope>MUTAGENESIS OF HIS-107; HIS-109 AND HIS-150</scope>
    <source>
        <strain>QT12</strain>
    </source>
</reference>
<protein>
    <recommendedName>
        <fullName evidence="2">5-aminosalicylate 1,2-dioxygenase</fullName>
        <shortName evidence="2">5ASA 1,2-dioxygenase</shortName>
        <ecNumber evidence="1">1.13.11.86</ecNumber>
    </recommendedName>
</protein>